<keyword id="KW-0963">Cytoplasm</keyword>
<keyword id="KW-0206">Cytoskeleton</keyword>
<keyword id="KW-0342">GTP-binding</keyword>
<keyword id="KW-0460">Magnesium</keyword>
<keyword id="KW-0479">Metal-binding</keyword>
<keyword id="KW-0493">Microtubule</keyword>
<keyword id="KW-0547">Nucleotide-binding</keyword>
<proteinExistence type="inferred from homology"/>
<protein>
    <recommendedName>
        <fullName>Tubulin beta chain</fullName>
    </recommendedName>
    <alternativeName>
        <fullName>Beta-tubulin</fullName>
    </alternativeName>
</protein>
<reference key="1">
    <citation type="journal article" date="1989" name="Mol. Microbiol.">
        <title>Cloning of a beta-tubulin gene from Plasmodium falciparum.</title>
        <authorList>
            <person name="Delves C.J."/>
            <person name="Ridely R.G."/>
            <person name="Goman M."/>
            <person name="Holloway S.P."/>
            <person name="Hyde J.E."/>
            <person name="Scaife J.G."/>
        </authorList>
    </citation>
    <scope>NUCLEOTIDE SEQUENCE [GENOMIC DNA]</scope>
</reference>
<organism>
    <name type="scientific">Plasmodium falciparum (isolate K1 / Thailand)</name>
    <dbReference type="NCBI Taxonomy" id="5839"/>
    <lineage>
        <taxon>Eukaryota</taxon>
        <taxon>Sar</taxon>
        <taxon>Alveolata</taxon>
        <taxon>Apicomplexa</taxon>
        <taxon>Aconoidasida</taxon>
        <taxon>Haemosporida</taxon>
        <taxon>Plasmodiidae</taxon>
        <taxon>Plasmodium</taxon>
        <taxon>Plasmodium (Laverania)</taxon>
    </lineage>
</organism>
<comment type="function">
    <text>Tubulin is the major constituent of microtubules, a cylinder consisting of laterally associated linear protofilaments composed of alpha- and beta-tubulin heterodimers. Microtubules grow by the addition of GTP-tubulin dimers to the microtubule end, where a stabilizing cap forms. Below the cap, tubulin dimers are in GDP-bound state, owing to GTPase activity of alpha-tubulin.</text>
</comment>
<comment type="cofactor">
    <cofactor evidence="1">
        <name>Mg(2+)</name>
        <dbReference type="ChEBI" id="CHEBI:18420"/>
    </cofactor>
</comment>
<comment type="subunit">
    <text evidence="3 5">Dimer of alpha and beta chains (By similarity). A typical microtubule is a hollow water-filled tube with an outer diameter of 25 nm and an inner diameter of 15 nM. Alpha-beta heterodimers associate head-to-tail to form protofilaments running lengthwise along the microtubule wall with the beta-tubulin subunit facing the microtubule plus end conferring a structural polarity. Microtubules usually have 13 protofilaments but different protofilament numbers can be found in some organisms and specialized cells (Probable). Interacts with DCX/apicortin; the interaction stabilizes microtubule assembly (By similarity).</text>
</comment>
<comment type="subcellular location">
    <subcellularLocation>
        <location evidence="3">Cytoplasm</location>
        <location evidence="3">Cytoskeleton</location>
    </subcellularLocation>
    <text evidence="3">Localizes to the parasite surface in subpellicular regions in trophozoites and schizonts (By similarity). In merozoites, localize to the apical end of the parasite (By similarity).</text>
</comment>
<comment type="similarity">
    <text evidence="5">Belongs to the tubulin family.</text>
</comment>
<sequence>MREIVHIQAGQCGNQIGAKFWEVISDEHGIDPSGTYCGDSDLQLERVDVFYNEATGGRYVPRAILMDLEPGTMDSVRAGPFGQLFRPDNFVFGQTGAGNNWAKGHYTEGAELIDAVLDVVRKEAEGCDCLQGFQITHSLGGGTGSGMGTLLISKIREEYPDRIMETFSVFPSPKVSDTVVEPYNATLSVHQLVENADEVQVIDNEALYDICFRTLKLTTPTYGDLNHLVSAAMSGVTCSLRFPGQLNSDLRKLAVNLIPFPRLHFFMIGFAPLTSRGSQQYRALTVPELTQQMFDAKNMMCASDPRHGRYLTACAMFRGRMSTKEVDEQMLNVQNKNSSYFVEWIPHNTKSSVCDIPPKGLKMAVTFVGNSTAIQEMFKRVSDQFTAMFRRKAFLHWYTGEGMDEMEFTEAESNMNDLVSEYQQYQDATAEEEGEFEEEEGDVEA</sequence>
<name>TBB_PLAFK</name>
<evidence type="ECO:0000250" key="1">
    <source>
        <dbReference type="UniProtKB" id="P68363"/>
    </source>
</evidence>
<evidence type="ECO:0000250" key="2">
    <source>
        <dbReference type="UniProtKB" id="Q13509"/>
    </source>
</evidence>
<evidence type="ECO:0000250" key="3">
    <source>
        <dbReference type="UniProtKB" id="Q7KQL5"/>
    </source>
</evidence>
<evidence type="ECO:0000256" key="4">
    <source>
        <dbReference type="SAM" id="MobiDB-lite"/>
    </source>
</evidence>
<evidence type="ECO:0000305" key="5"/>
<feature type="chain" id="PRO_0000048312" description="Tubulin beta chain">
    <location>
        <begin position="1"/>
        <end position="445"/>
    </location>
</feature>
<feature type="region of interest" description="Disordered" evidence="4">
    <location>
        <begin position="426"/>
        <end position="445"/>
    </location>
</feature>
<feature type="compositionally biased region" description="Acidic residues" evidence="4">
    <location>
        <begin position="429"/>
        <end position="445"/>
    </location>
</feature>
<feature type="binding site" evidence="2">
    <location>
        <position position="11"/>
    </location>
    <ligand>
        <name>GTP</name>
        <dbReference type="ChEBI" id="CHEBI:37565"/>
    </ligand>
</feature>
<feature type="binding site" evidence="1">
    <location>
        <position position="69"/>
    </location>
    <ligand>
        <name>GTP</name>
        <dbReference type="ChEBI" id="CHEBI:37565"/>
    </ligand>
</feature>
<feature type="binding site" evidence="1">
    <location>
        <position position="69"/>
    </location>
    <ligand>
        <name>Mg(2+)</name>
        <dbReference type="ChEBI" id="CHEBI:18420"/>
    </ligand>
</feature>
<feature type="binding site" evidence="2">
    <location>
        <position position="138"/>
    </location>
    <ligand>
        <name>GTP</name>
        <dbReference type="ChEBI" id="CHEBI:37565"/>
    </ligand>
</feature>
<feature type="binding site" evidence="2">
    <location>
        <position position="142"/>
    </location>
    <ligand>
        <name>GTP</name>
        <dbReference type="ChEBI" id="CHEBI:37565"/>
    </ligand>
</feature>
<feature type="binding site" evidence="2">
    <location>
        <position position="143"/>
    </location>
    <ligand>
        <name>GTP</name>
        <dbReference type="ChEBI" id="CHEBI:37565"/>
    </ligand>
</feature>
<feature type="binding site" evidence="2">
    <location>
        <position position="144"/>
    </location>
    <ligand>
        <name>GTP</name>
        <dbReference type="ChEBI" id="CHEBI:37565"/>
    </ligand>
</feature>
<feature type="binding site" evidence="2">
    <location>
        <position position="204"/>
    </location>
    <ligand>
        <name>GTP</name>
        <dbReference type="ChEBI" id="CHEBI:37565"/>
    </ligand>
</feature>
<feature type="binding site" evidence="2">
    <location>
        <position position="226"/>
    </location>
    <ligand>
        <name>GTP</name>
        <dbReference type="ChEBI" id="CHEBI:37565"/>
    </ligand>
</feature>
<dbReference type="EMBL" id="X16075">
    <property type="protein sequence ID" value="CAA34207.1"/>
    <property type="molecule type" value="Genomic_DNA"/>
</dbReference>
<dbReference type="PIR" id="S07460">
    <property type="entry name" value="UBZQF"/>
</dbReference>
<dbReference type="SMR" id="P14643"/>
<dbReference type="GO" id="GO:0005737">
    <property type="term" value="C:cytoplasm"/>
    <property type="evidence" value="ECO:0007669"/>
    <property type="project" value="UniProtKB-KW"/>
</dbReference>
<dbReference type="GO" id="GO:0005874">
    <property type="term" value="C:microtubule"/>
    <property type="evidence" value="ECO:0007669"/>
    <property type="project" value="UniProtKB-KW"/>
</dbReference>
<dbReference type="GO" id="GO:0005525">
    <property type="term" value="F:GTP binding"/>
    <property type="evidence" value="ECO:0007669"/>
    <property type="project" value="UniProtKB-KW"/>
</dbReference>
<dbReference type="GO" id="GO:0003924">
    <property type="term" value="F:GTPase activity"/>
    <property type="evidence" value="ECO:0007669"/>
    <property type="project" value="InterPro"/>
</dbReference>
<dbReference type="GO" id="GO:0046872">
    <property type="term" value="F:metal ion binding"/>
    <property type="evidence" value="ECO:0007669"/>
    <property type="project" value="UniProtKB-KW"/>
</dbReference>
<dbReference type="GO" id="GO:0005200">
    <property type="term" value="F:structural constituent of cytoskeleton"/>
    <property type="evidence" value="ECO:0007669"/>
    <property type="project" value="InterPro"/>
</dbReference>
<dbReference type="GO" id="GO:0007017">
    <property type="term" value="P:microtubule-based process"/>
    <property type="evidence" value="ECO:0007669"/>
    <property type="project" value="InterPro"/>
</dbReference>
<dbReference type="CDD" id="cd02187">
    <property type="entry name" value="beta_tubulin"/>
    <property type="match status" value="1"/>
</dbReference>
<dbReference type="FunFam" id="1.10.287.600:FF:000006">
    <property type="entry name" value="Tubulin beta chain"/>
    <property type="match status" value="1"/>
</dbReference>
<dbReference type="FunFam" id="3.30.1330.20:FF:000002">
    <property type="entry name" value="Tubulin beta chain"/>
    <property type="match status" value="1"/>
</dbReference>
<dbReference type="FunFam" id="3.40.50.1440:FF:000003">
    <property type="entry name" value="Tubulin beta chain"/>
    <property type="match status" value="1"/>
</dbReference>
<dbReference type="Gene3D" id="1.10.287.600">
    <property type="entry name" value="Helix hairpin bin"/>
    <property type="match status" value="1"/>
</dbReference>
<dbReference type="Gene3D" id="3.30.1330.20">
    <property type="entry name" value="Tubulin/FtsZ, C-terminal domain"/>
    <property type="match status" value="1"/>
</dbReference>
<dbReference type="Gene3D" id="3.40.50.1440">
    <property type="entry name" value="Tubulin/FtsZ, GTPase domain"/>
    <property type="match status" value="1"/>
</dbReference>
<dbReference type="InterPro" id="IPR013838">
    <property type="entry name" value="Beta-tubulin_BS"/>
</dbReference>
<dbReference type="InterPro" id="IPR002453">
    <property type="entry name" value="Beta_tubulin"/>
</dbReference>
<dbReference type="InterPro" id="IPR008280">
    <property type="entry name" value="Tub_FtsZ_C"/>
</dbReference>
<dbReference type="InterPro" id="IPR000217">
    <property type="entry name" value="Tubulin"/>
</dbReference>
<dbReference type="InterPro" id="IPR037103">
    <property type="entry name" value="Tubulin/FtsZ-like_C"/>
</dbReference>
<dbReference type="InterPro" id="IPR018316">
    <property type="entry name" value="Tubulin/FtsZ_2-layer-sand-dom"/>
</dbReference>
<dbReference type="InterPro" id="IPR036525">
    <property type="entry name" value="Tubulin/FtsZ_GTPase_sf"/>
</dbReference>
<dbReference type="InterPro" id="IPR023123">
    <property type="entry name" value="Tubulin_C"/>
</dbReference>
<dbReference type="InterPro" id="IPR017975">
    <property type="entry name" value="Tubulin_CS"/>
</dbReference>
<dbReference type="InterPro" id="IPR003008">
    <property type="entry name" value="Tubulin_FtsZ_GTPase"/>
</dbReference>
<dbReference type="PANTHER" id="PTHR11588">
    <property type="entry name" value="TUBULIN"/>
    <property type="match status" value="1"/>
</dbReference>
<dbReference type="Pfam" id="PF00091">
    <property type="entry name" value="Tubulin"/>
    <property type="match status" value="1"/>
</dbReference>
<dbReference type="Pfam" id="PF03953">
    <property type="entry name" value="Tubulin_C"/>
    <property type="match status" value="1"/>
</dbReference>
<dbReference type="PRINTS" id="PR01163">
    <property type="entry name" value="BETATUBULIN"/>
</dbReference>
<dbReference type="PRINTS" id="PR01161">
    <property type="entry name" value="TUBULIN"/>
</dbReference>
<dbReference type="SMART" id="SM00864">
    <property type="entry name" value="Tubulin"/>
    <property type="match status" value="1"/>
</dbReference>
<dbReference type="SMART" id="SM00865">
    <property type="entry name" value="Tubulin_C"/>
    <property type="match status" value="1"/>
</dbReference>
<dbReference type="SUPFAM" id="SSF55307">
    <property type="entry name" value="Tubulin C-terminal domain-like"/>
    <property type="match status" value="1"/>
</dbReference>
<dbReference type="SUPFAM" id="SSF52490">
    <property type="entry name" value="Tubulin nucleotide-binding domain-like"/>
    <property type="match status" value="1"/>
</dbReference>
<dbReference type="PROSITE" id="PS00227">
    <property type="entry name" value="TUBULIN"/>
    <property type="match status" value="1"/>
</dbReference>
<dbReference type="PROSITE" id="PS00228">
    <property type="entry name" value="TUBULIN_B_AUTOREG"/>
    <property type="match status" value="1"/>
</dbReference>
<accession>P14643</accession>